<protein>
    <recommendedName>
        <fullName>Uncharacterized protein MTH_1463</fullName>
    </recommendedName>
    <alternativeName>
        <fullName>ORF11</fullName>
    </alternativeName>
</protein>
<dbReference type="EMBL" id="U19362">
    <property type="protein sequence ID" value="AAA87411.1"/>
    <property type="molecule type" value="Genomic_DNA"/>
</dbReference>
<dbReference type="EMBL" id="AE000666">
    <property type="protein sequence ID" value="AAB85938.1"/>
    <property type="molecule type" value="Genomic_DNA"/>
</dbReference>
<dbReference type="PIR" id="H69061">
    <property type="entry name" value="H69061"/>
</dbReference>
<dbReference type="RefSeq" id="WP_010877073.1">
    <property type="nucleotide sequence ID" value="NC_000916.1"/>
</dbReference>
<dbReference type="SMR" id="Q50500"/>
<dbReference type="STRING" id="187420.MTH_1463"/>
<dbReference type="PaxDb" id="187420-MTH_1463"/>
<dbReference type="EnsemblBacteria" id="AAB85938">
    <property type="protein sequence ID" value="AAB85938"/>
    <property type="gene ID" value="MTH_1463"/>
</dbReference>
<dbReference type="KEGG" id="mth:MTH_1463"/>
<dbReference type="HOGENOM" id="CLU_1860740_0_0_2"/>
<dbReference type="InParanoid" id="Q50500"/>
<dbReference type="Proteomes" id="UP000005223">
    <property type="component" value="Chromosome"/>
</dbReference>
<dbReference type="GO" id="GO:0016020">
    <property type="term" value="C:membrane"/>
    <property type="evidence" value="ECO:0007669"/>
    <property type="project" value="InterPro"/>
</dbReference>
<dbReference type="GO" id="GO:0005524">
    <property type="term" value="F:ATP binding"/>
    <property type="evidence" value="ECO:0007669"/>
    <property type="project" value="InterPro"/>
</dbReference>
<dbReference type="GO" id="GO:0008234">
    <property type="term" value="F:cysteine-type peptidase activity"/>
    <property type="evidence" value="ECO:0007669"/>
    <property type="project" value="UniProtKB-KW"/>
</dbReference>
<dbReference type="GO" id="GO:0006508">
    <property type="term" value="P:proteolysis"/>
    <property type="evidence" value="ECO:0007669"/>
    <property type="project" value="UniProtKB-KW"/>
</dbReference>
<dbReference type="CDD" id="cd02423">
    <property type="entry name" value="Peptidase_C39G"/>
    <property type="match status" value="1"/>
</dbReference>
<dbReference type="Gene3D" id="3.90.70.10">
    <property type="entry name" value="Cysteine proteinases"/>
    <property type="match status" value="1"/>
</dbReference>
<dbReference type="InterPro" id="IPR005074">
    <property type="entry name" value="Peptidase_C39"/>
</dbReference>
<dbReference type="Pfam" id="PF03412">
    <property type="entry name" value="Peptidase_C39"/>
    <property type="match status" value="1"/>
</dbReference>
<dbReference type="PROSITE" id="PS50990">
    <property type="entry name" value="PEPTIDASE_C39"/>
    <property type="match status" value="1"/>
</dbReference>
<accession>Q50500</accession>
<reference key="1">
    <citation type="journal article" date="1995" name="J. Bacteriol.">
        <title>Organization and growth phase-dependent transcription of methane genes in two regions of the Methanobacterium thermoautotrophicum genome.</title>
        <authorList>
            <person name="Noelling J."/>
            <person name="Pihl T.D."/>
            <person name="Vriesema A."/>
            <person name="Reeve J.N."/>
        </authorList>
    </citation>
    <scope>NUCLEOTIDE SEQUENCE [GENOMIC DNA]</scope>
    <source>
        <strain>ATCC 29096 / DSM 1053 / JCM 10044 / NBRC 100330 / Delta H</strain>
    </source>
</reference>
<reference key="2">
    <citation type="journal article" date="1997" name="J. Bacteriol.">
        <title>Complete genome sequence of Methanobacterium thermoautotrophicum deltaH: functional analysis and comparative genomics.</title>
        <authorList>
            <person name="Smith D.R."/>
            <person name="Doucette-Stamm L.A."/>
            <person name="Deloughery C."/>
            <person name="Lee H.-M."/>
            <person name="Dubois J."/>
            <person name="Aldredge T."/>
            <person name="Bashirzadeh R."/>
            <person name="Blakely D."/>
            <person name="Cook R."/>
            <person name="Gilbert K."/>
            <person name="Harrison D."/>
            <person name="Hoang L."/>
            <person name="Keagle P."/>
            <person name="Lumm W."/>
            <person name="Pothier B."/>
            <person name="Qiu D."/>
            <person name="Spadafora R."/>
            <person name="Vicare R."/>
            <person name="Wang Y."/>
            <person name="Wierzbowski J."/>
            <person name="Gibson R."/>
            <person name="Jiwani N."/>
            <person name="Caruso A."/>
            <person name="Bush D."/>
            <person name="Safer H."/>
            <person name="Patwell D."/>
            <person name="Prabhakar S."/>
            <person name="McDougall S."/>
            <person name="Shimer G."/>
            <person name="Goyal A."/>
            <person name="Pietrovski S."/>
            <person name="Church G.M."/>
            <person name="Daniels C.J."/>
            <person name="Mao J.-I."/>
            <person name="Rice P."/>
            <person name="Noelling J."/>
            <person name="Reeve J.N."/>
        </authorList>
    </citation>
    <scope>NUCLEOTIDE SEQUENCE [LARGE SCALE GENOMIC DNA]</scope>
    <source>
        <strain>ATCC 29096 / DSM 1053 / JCM 10044 / NBRC 100330 / Delta H</strain>
    </source>
</reference>
<evidence type="ECO:0000255" key="1">
    <source>
        <dbReference type="PROSITE-ProRule" id="PRU00362"/>
    </source>
</evidence>
<keyword id="KW-0378">Hydrolase</keyword>
<keyword id="KW-0645">Protease</keyword>
<keyword id="KW-1185">Reference proteome</keyword>
<keyword id="KW-0788">Thiol protease</keyword>
<proteinExistence type="predicted"/>
<sequence length="142" mass="15524">MEVFVMSTSLGDEVIVMQSRSYSCGPAALATVLRNLGVNCTEAELAELAGTDESGTTMYGLIVAATSKGLRARGVKMELNDLRKNHIVFVKYGDTCHYTVIMSMDERNVTLADPALGRITVKREIFSRIFTGNVLVVERPCD</sequence>
<feature type="chain" id="PRO_0000138639" description="Uncharacterized protein MTH_1463">
    <location>
        <begin position="1"/>
        <end position="142"/>
    </location>
</feature>
<feature type="domain" description="Peptidase C39" evidence="1">
    <location>
        <begin position="18"/>
        <end position="137"/>
    </location>
</feature>
<organism>
    <name type="scientific">Methanothermobacter thermautotrophicus (strain ATCC 29096 / DSM 1053 / JCM 10044 / NBRC 100330 / Delta H)</name>
    <name type="common">Methanobacterium thermoautotrophicum</name>
    <dbReference type="NCBI Taxonomy" id="187420"/>
    <lineage>
        <taxon>Archaea</taxon>
        <taxon>Methanobacteriati</taxon>
        <taxon>Methanobacteriota</taxon>
        <taxon>Methanomada group</taxon>
        <taxon>Methanobacteria</taxon>
        <taxon>Methanobacteriales</taxon>
        <taxon>Methanobacteriaceae</taxon>
        <taxon>Methanothermobacter</taxon>
    </lineage>
</organism>
<gene>
    <name type="ordered locus">MTH_1463</name>
</gene>
<name>Y1463_METTH</name>